<accession>A5DLG8</accession>
<comment type="function">
    <text evidence="1">Forms a chaperone-bound H2A.Z-H2B complex that acts as a source for SWR1 complex-dependent H2A to H2A.Z histone replacement in chromatin.</text>
</comment>
<comment type="subunit">
    <text evidence="1">Forms a heterotrimer with H2A.Z-H2B, stabilizing the association of the histone dimer. Also, with a lower affinity, forms a heterotrimer with H2A-H2B (By similarity).</text>
</comment>
<comment type="subcellular location">
    <subcellularLocation>
        <location evidence="1">Nucleus</location>
    </subcellularLocation>
</comment>
<comment type="similarity">
    <text evidence="3">Belongs to the CHZ1 family.</text>
</comment>
<comment type="sequence caution" evidence="3">
    <conflict type="erroneous initiation">
        <sequence resource="EMBL-CDS" id="EDK40021"/>
    </conflict>
</comment>
<proteinExistence type="inferred from homology"/>
<feature type="chain" id="PRO_0000330218" description="Histone H2A.Z-specific chaperone CHZ1">
    <location>
        <begin position="1"/>
        <end position="154"/>
    </location>
</feature>
<feature type="region of interest" description="Disordered" evidence="2">
    <location>
        <begin position="1"/>
        <end position="118"/>
    </location>
</feature>
<feature type="region of interest" description="Disordered" evidence="2">
    <location>
        <begin position="135"/>
        <end position="154"/>
    </location>
</feature>
<feature type="compositionally biased region" description="Basic and acidic residues" evidence="2">
    <location>
        <begin position="1"/>
        <end position="54"/>
    </location>
</feature>
<feature type="compositionally biased region" description="Basic and acidic residues" evidence="2">
    <location>
        <begin position="64"/>
        <end position="74"/>
    </location>
</feature>
<feature type="compositionally biased region" description="Acidic residues" evidence="2">
    <location>
        <begin position="75"/>
        <end position="108"/>
    </location>
</feature>
<feature type="compositionally biased region" description="Acidic residues" evidence="2">
    <location>
        <begin position="140"/>
        <end position="154"/>
    </location>
</feature>
<dbReference type="EMBL" id="CH408159">
    <property type="protein sequence ID" value="EDK40021.1"/>
    <property type="status" value="ALT_INIT"/>
    <property type="molecule type" value="Genomic_DNA"/>
</dbReference>
<dbReference type="RefSeq" id="XP_001483390.1">
    <property type="nucleotide sequence ID" value="XM_001483340.1"/>
</dbReference>
<dbReference type="SMR" id="A5DLG8"/>
<dbReference type="STRING" id="294746.A5DLG8"/>
<dbReference type="GeneID" id="5125267"/>
<dbReference type="KEGG" id="pgu:PGUG_04119"/>
<dbReference type="eggNOG" id="ENOG502SCUM">
    <property type="taxonomic scope" value="Eukaryota"/>
</dbReference>
<dbReference type="HOGENOM" id="CLU_126134_0_0_1"/>
<dbReference type="InParanoid" id="A5DLG8"/>
<dbReference type="OrthoDB" id="4026609at2759"/>
<dbReference type="Proteomes" id="UP000001997">
    <property type="component" value="Unassembled WGS sequence"/>
</dbReference>
<dbReference type="GO" id="GO:0005634">
    <property type="term" value="C:nucleus"/>
    <property type="evidence" value="ECO:0007669"/>
    <property type="project" value="UniProtKB-SubCell"/>
</dbReference>
<dbReference type="InterPro" id="IPR019098">
    <property type="entry name" value="Histone_chaperone_domain_CHZ"/>
</dbReference>
<dbReference type="Pfam" id="PF09649">
    <property type="entry name" value="CHZ"/>
    <property type="match status" value="1"/>
</dbReference>
<dbReference type="SMART" id="SM01082">
    <property type="entry name" value="CHZ"/>
    <property type="match status" value="1"/>
</dbReference>
<reference key="1">
    <citation type="journal article" date="2009" name="Nature">
        <title>Evolution of pathogenicity and sexual reproduction in eight Candida genomes.</title>
        <authorList>
            <person name="Butler G."/>
            <person name="Rasmussen M.D."/>
            <person name="Lin M.F."/>
            <person name="Santos M.A.S."/>
            <person name="Sakthikumar S."/>
            <person name="Munro C.A."/>
            <person name="Rheinbay E."/>
            <person name="Grabherr M."/>
            <person name="Forche A."/>
            <person name="Reedy J.L."/>
            <person name="Agrafioti I."/>
            <person name="Arnaud M.B."/>
            <person name="Bates S."/>
            <person name="Brown A.J.P."/>
            <person name="Brunke S."/>
            <person name="Costanzo M.C."/>
            <person name="Fitzpatrick D.A."/>
            <person name="de Groot P.W.J."/>
            <person name="Harris D."/>
            <person name="Hoyer L.L."/>
            <person name="Hube B."/>
            <person name="Klis F.M."/>
            <person name="Kodira C."/>
            <person name="Lennard N."/>
            <person name="Logue M.E."/>
            <person name="Martin R."/>
            <person name="Neiman A.M."/>
            <person name="Nikolaou E."/>
            <person name="Quail M.A."/>
            <person name="Quinn J."/>
            <person name="Santos M.C."/>
            <person name="Schmitzberger F.F."/>
            <person name="Sherlock G."/>
            <person name="Shah P."/>
            <person name="Silverstein K.A.T."/>
            <person name="Skrzypek M.S."/>
            <person name="Soll D."/>
            <person name="Staggs R."/>
            <person name="Stansfield I."/>
            <person name="Stumpf M.P.H."/>
            <person name="Sudbery P.E."/>
            <person name="Srikantha T."/>
            <person name="Zeng Q."/>
            <person name="Berman J."/>
            <person name="Berriman M."/>
            <person name="Heitman J."/>
            <person name="Gow N.A.R."/>
            <person name="Lorenz M.C."/>
            <person name="Birren B.W."/>
            <person name="Kellis M."/>
            <person name="Cuomo C.A."/>
        </authorList>
    </citation>
    <scope>NUCLEOTIDE SEQUENCE [LARGE SCALE GENOMIC DNA]</scope>
    <source>
        <strain>ATCC 6260 / CBS 566 / DSM 6381 / JCM 1539 / NBRC 10279 / NRRL Y-324</strain>
    </source>
</reference>
<organism>
    <name type="scientific">Meyerozyma guilliermondii (strain ATCC 6260 / CBS 566 / DSM 6381 / JCM 1539 / NBRC 10279 / NRRL Y-324)</name>
    <name type="common">Yeast</name>
    <name type="synonym">Candida guilliermondii</name>
    <dbReference type="NCBI Taxonomy" id="294746"/>
    <lineage>
        <taxon>Eukaryota</taxon>
        <taxon>Fungi</taxon>
        <taxon>Dikarya</taxon>
        <taxon>Ascomycota</taxon>
        <taxon>Saccharomycotina</taxon>
        <taxon>Pichiomycetes</taxon>
        <taxon>Debaryomycetaceae</taxon>
        <taxon>Meyerozyma</taxon>
    </lineage>
</organism>
<keyword id="KW-0143">Chaperone</keyword>
<keyword id="KW-0539">Nucleus</keyword>
<keyword id="KW-1185">Reference proteome</keyword>
<protein>
    <recommendedName>
        <fullName>Histone H2A.Z-specific chaperone CHZ1</fullName>
    </recommendedName>
</protein>
<gene>
    <name type="primary">CHZ1</name>
    <name type="ORF">PGUG_04119</name>
</gene>
<name>CHZ1_PICGU</name>
<evidence type="ECO:0000250" key="1"/>
<evidence type="ECO:0000256" key="2">
    <source>
        <dbReference type="SAM" id="MobiDB-lite"/>
    </source>
</evidence>
<evidence type="ECO:0000305" key="3"/>
<sequence length="154" mass="17508">MAEEEKPPVSESIEDNKDDKKRTIDKVDDSVEDGAEKKPEAAVKNDGETAEKPEKKHKKRRRRQYEDEVPKEKSEDEGEDEEDEDDDGDEINDELADLDDEDDDDLAEIDPANIIPSGRRTRGKVIDFTKAAEKLKEEGKIEDDEGEDGEYGEK</sequence>